<reference key="1">
    <citation type="journal article" date="2009" name="Stand. Genomic Sci.">
        <title>Complete genome sequence of Methanocorpusculum labreanum type strain Z.</title>
        <authorList>
            <person name="Anderson I.J."/>
            <person name="Sieprawska-Lupa M."/>
            <person name="Goltsman E."/>
            <person name="Lapidus A."/>
            <person name="Copeland A."/>
            <person name="Glavina Del Rio T."/>
            <person name="Tice H."/>
            <person name="Dalin E."/>
            <person name="Barry K."/>
            <person name="Pitluck S."/>
            <person name="Hauser L."/>
            <person name="Land M."/>
            <person name="Lucas S."/>
            <person name="Richardson P."/>
            <person name="Whitman W.B."/>
            <person name="Kyrpides N.C."/>
        </authorList>
    </citation>
    <scope>NUCLEOTIDE SEQUENCE [LARGE SCALE GENOMIC DNA]</scope>
    <source>
        <strain>ATCC 43576 / DSM 4855 / Z</strain>
    </source>
</reference>
<sequence>MGIKPSYIKSMGIALLEQHGKSFNGNFDDNKKVVAEITTIESKMIRNRVAGYVTRKVNTTPARR</sequence>
<organism>
    <name type="scientific">Methanocorpusculum labreanum (strain ATCC 43576 / DSM 4855 / Z)</name>
    <dbReference type="NCBI Taxonomy" id="410358"/>
    <lineage>
        <taxon>Archaea</taxon>
        <taxon>Methanobacteriati</taxon>
        <taxon>Methanobacteriota</taxon>
        <taxon>Stenosarchaea group</taxon>
        <taxon>Methanomicrobia</taxon>
        <taxon>Methanomicrobiales</taxon>
        <taxon>Methanocorpusculaceae</taxon>
        <taxon>Methanocorpusculum</taxon>
    </lineage>
</organism>
<keyword id="KW-1185">Reference proteome</keyword>
<keyword id="KW-0687">Ribonucleoprotein</keyword>
<keyword id="KW-0689">Ribosomal protein</keyword>
<proteinExistence type="inferred from homology"/>
<feature type="chain" id="PRO_1000127257" description="Small ribosomal subunit protein eS17">
    <location>
        <begin position="1"/>
        <end position="64"/>
    </location>
</feature>
<protein>
    <recommendedName>
        <fullName evidence="1">Small ribosomal subunit protein eS17</fullName>
    </recommendedName>
    <alternativeName>
        <fullName evidence="2">30S ribosomal protein S17e</fullName>
    </alternativeName>
</protein>
<accession>A2SST9</accession>
<dbReference type="EMBL" id="CP000559">
    <property type="protein sequence ID" value="ABN07395.1"/>
    <property type="molecule type" value="Genomic_DNA"/>
</dbReference>
<dbReference type="RefSeq" id="WP_011833598.1">
    <property type="nucleotide sequence ID" value="NC_008942.1"/>
</dbReference>
<dbReference type="SMR" id="A2SST9"/>
<dbReference type="STRING" id="410358.Mlab_1226"/>
<dbReference type="GeneID" id="4795834"/>
<dbReference type="KEGG" id="mla:Mlab_1226"/>
<dbReference type="eggNOG" id="arCOG01885">
    <property type="taxonomic scope" value="Archaea"/>
</dbReference>
<dbReference type="HOGENOM" id="CLU_176720_1_0_2"/>
<dbReference type="OrthoDB" id="52479at2157"/>
<dbReference type="Proteomes" id="UP000000365">
    <property type="component" value="Chromosome"/>
</dbReference>
<dbReference type="GO" id="GO:1990904">
    <property type="term" value="C:ribonucleoprotein complex"/>
    <property type="evidence" value="ECO:0007669"/>
    <property type="project" value="UniProtKB-KW"/>
</dbReference>
<dbReference type="GO" id="GO:0005840">
    <property type="term" value="C:ribosome"/>
    <property type="evidence" value="ECO:0007669"/>
    <property type="project" value="UniProtKB-KW"/>
</dbReference>
<dbReference type="GO" id="GO:0003735">
    <property type="term" value="F:structural constituent of ribosome"/>
    <property type="evidence" value="ECO:0007669"/>
    <property type="project" value="InterPro"/>
</dbReference>
<dbReference type="GO" id="GO:0006412">
    <property type="term" value="P:translation"/>
    <property type="evidence" value="ECO:0007669"/>
    <property type="project" value="UniProtKB-UniRule"/>
</dbReference>
<dbReference type="Gene3D" id="1.10.60.20">
    <property type="entry name" value="Ribosomal protein S17e-like"/>
    <property type="match status" value="1"/>
</dbReference>
<dbReference type="HAMAP" id="MF_00511">
    <property type="entry name" value="Ribosomal_eS17"/>
    <property type="match status" value="1"/>
</dbReference>
<dbReference type="InterPro" id="IPR001210">
    <property type="entry name" value="Ribosomal_eS17"/>
</dbReference>
<dbReference type="InterPro" id="IPR018273">
    <property type="entry name" value="Ribosomal_eS17_CS"/>
</dbReference>
<dbReference type="InterPro" id="IPR036401">
    <property type="entry name" value="Ribosomal_eS17_sf"/>
</dbReference>
<dbReference type="NCBIfam" id="NF002242">
    <property type="entry name" value="PRK01151.1"/>
    <property type="match status" value="1"/>
</dbReference>
<dbReference type="Pfam" id="PF00833">
    <property type="entry name" value="Ribosomal_S17e"/>
    <property type="match status" value="1"/>
</dbReference>
<dbReference type="SUPFAM" id="SSF116820">
    <property type="entry name" value="Rps17e-like"/>
    <property type="match status" value="1"/>
</dbReference>
<dbReference type="PROSITE" id="PS00712">
    <property type="entry name" value="RIBOSOMAL_S17E"/>
    <property type="match status" value="1"/>
</dbReference>
<comment type="similarity">
    <text evidence="1">Belongs to the eukaryotic ribosomal protein eS17 family.</text>
</comment>
<evidence type="ECO:0000255" key="1">
    <source>
        <dbReference type="HAMAP-Rule" id="MF_00511"/>
    </source>
</evidence>
<evidence type="ECO:0000305" key="2"/>
<gene>
    <name evidence="1" type="primary">rps17e</name>
    <name type="ordered locus">Mlab_1226</name>
</gene>
<name>RS17E_METLZ</name>